<organism>
    <name type="scientific">Drosophila melanogaster</name>
    <name type="common">Fruit fly</name>
    <dbReference type="NCBI Taxonomy" id="7227"/>
    <lineage>
        <taxon>Eukaryota</taxon>
        <taxon>Metazoa</taxon>
        <taxon>Ecdysozoa</taxon>
        <taxon>Arthropoda</taxon>
        <taxon>Hexapoda</taxon>
        <taxon>Insecta</taxon>
        <taxon>Pterygota</taxon>
        <taxon>Neoptera</taxon>
        <taxon>Endopterygota</taxon>
        <taxon>Diptera</taxon>
        <taxon>Brachycera</taxon>
        <taxon>Muscomorpha</taxon>
        <taxon>Ephydroidea</taxon>
        <taxon>Drosophilidae</taxon>
        <taxon>Drosophila</taxon>
        <taxon>Sophophora</taxon>
    </lineage>
</organism>
<name>PPIA_DROME</name>
<sequence>MVSFCATLIRQFRHRSAAAFQIAESAILANKSITLASSACSVNRGQLQFGIQIVREYSKASKMSTLPRVFFDMTADNEPLGRIVMELRSDVVPKTAENFRALCTGEKGFGYKGSIFHRVIPNFMCQGGDFTNHNGTGGKSIYGNKFPDENFELKHTGSGILSMANAGANTNGSQFFICTVKTAWLDNKHVVFGEVVEGLDVVKKIESYGSQSGKTSKKIIVANSGSL</sequence>
<feature type="chain" id="PRO_0000064123" description="Peptidyl-prolyl cis-trans isomerase">
    <location>
        <begin position="1"/>
        <end position="227"/>
    </location>
</feature>
<feature type="domain" description="PPIase cyclophilin-type" evidence="1">
    <location>
        <begin position="70"/>
        <end position="226"/>
    </location>
</feature>
<feature type="modified residue" description="Phosphoserine" evidence="2">
    <location>
        <position position="158"/>
    </location>
</feature>
<dbReference type="EC" id="5.2.1.8"/>
<dbReference type="EMBL" id="AE014298">
    <property type="protein sequence ID" value="AAF48589.2"/>
    <property type="molecule type" value="Genomic_DNA"/>
</dbReference>
<dbReference type="EMBL" id="BT009946">
    <property type="protein sequence ID" value="AAQ22415.1"/>
    <property type="status" value="ALT_INIT"/>
    <property type="molecule type" value="mRNA"/>
</dbReference>
<dbReference type="EMBL" id="M62398">
    <property type="protein sequence ID" value="AAB03701.1"/>
    <property type="status" value="ALT_INIT"/>
    <property type="molecule type" value="mRNA"/>
</dbReference>
<dbReference type="PIR" id="B38388">
    <property type="entry name" value="B38388"/>
</dbReference>
<dbReference type="RefSeq" id="NP_523366.2">
    <property type="nucleotide sequence ID" value="NM_078642.4"/>
</dbReference>
<dbReference type="SMR" id="P25007"/>
<dbReference type="BioGRID" id="58935">
    <property type="interactions" value="36"/>
</dbReference>
<dbReference type="DIP" id="DIP-18774N"/>
<dbReference type="FunCoup" id="P25007">
    <property type="interactions" value="1478"/>
</dbReference>
<dbReference type="IntAct" id="P25007">
    <property type="interactions" value="39"/>
</dbReference>
<dbReference type="STRING" id="7227.FBpp0074017"/>
<dbReference type="iPTMnet" id="P25007"/>
<dbReference type="PaxDb" id="7227-FBpp0074017"/>
<dbReference type="DNASU" id="32595"/>
<dbReference type="EnsemblMetazoa" id="FBtr0074238">
    <property type="protein sequence ID" value="FBpp0074017"/>
    <property type="gene ID" value="FBgn0004432"/>
</dbReference>
<dbReference type="GeneID" id="32595"/>
<dbReference type="KEGG" id="dme:Dmel_CG9916"/>
<dbReference type="AGR" id="FB:FBgn0004432"/>
<dbReference type="CTD" id="32595"/>
<dbReference type="FlyBase" id="FBgn0004432">
    <property type="gene designation" value="Cyp1"/>
</dbReference>
<dbReference type="VEuPathDB" id="VectorBase:FBgn0004432"/>
<dbReference type="eggNOG" id="KOG0865">
    <property type="taxonomic scope" value="Eukaryota"/>
</dbReference>
<dbReference type="GeneTree" id="ENSGT00940000174900"/>
<dbReference type="HOGENOM" id="CLU_012062_4_3_1"/>
<dbReference type="InParanoid" id="P25007"/>
<dbReference type="OMA" id="FKSIVPR"/>
<dbReference type="OrthoDB" id="193499at2759"/>
<dbReference type="PhylomeDB" id="P25007"/>
<dbReference type="Reactome" id="R-DME-210991">
    <property type="pathway name" value="Basigin interactions"/>
</dbReference>
<dbReference type="Reactome" id="R-DME-6798695">
    <property type="pathway name" value="Neutrophil degranulation"/>
</dbReference>
<dbReference type="BioGRID-ORCS" id="32595">
    <property type="hits" value="0 hits in 3 CRISPR screens"/>
</dbReference>
<dbReference type="GenomeRNAi" id="32595"/>
<dbReference type="PRO" id="PR:P25007"/>
<dbReference type="Proteomes" id="UP000000803">
    <property type="component" value="Chromosome X"/>
</dbReference>
<dbReference type="Bgee" id="FBgn0004432">
    <property type="expression patterns" value="Expressed in eye disc (Drosophila) and 294 other cell types or tissues"/>
</dbReference>
<dbReference type="ExpressionAtlas" id="P25007">
    <property type="expression patterns" value="baseline and differential"/>
</dbReference>
<dbReference type="GO" id="GO:0005737">
    <property type="term" value="C:cytoplasm"/>
    <property type="evidence" value="ECO:0007005"/>
    <property type="project" value="FlyBase"/>
</dbReference>
<dbReference type="GO" id="GO:0005829">
    <property type="term" value="C:cytosol"/>
    <property type="evidence" value="ECO:0000250"/>
    <property type="project" value="FlyBase"/>
</dbReference>
<dbReference type="GO" id="GO:0005739">
    <property type="term" value="C:mitochondrion"/>
    <property type="evidence" value="ECO:0000315"/>
    <property type="project" value="FlyBase"/>
</dbReference>
<dbReference type="GO" id="GO:0005634">
    <property type="term" value="C:nucleus"/>
    <property type="evidence" value="ECO:0007005"/>
    <property type="project" value="FlyBase"/>
</dbReference>
<dbReference type="GO" id="GO:0016018">
    <property type="term" value="F:cyclosporin A binding"/>
    <property type="evidence" value="ECO:0000318"/>
    <property type="project" value="GO_Central"/>
</dbReference>
<dbReference type="GO" id="GO:0003755">
    <property type="term" value="F:peptidyl-prolyl cis-trans isomerase activity"/>
    <property type="evidence" value="ECO:0000250"/>
    <property type="project" value="FlyBase"/>
</dbReference>
<dbReference type="GO" id="GO:0006457">
    <property type="term" value="P:protein folding"/>
    <property type="evidence" value="ECO:0000318"/>
    <property type="project" value="GO_Central"/>
</dbReference>
<dbReference type="GO" id="GO:0006979">
    <property type="term" value="P:response to oxidative stress"/>
    <property type="evidence" value="ECO:0000315"/>
    <property type="project" value="FlyBase"/>
</dbReference>
<dbReference type="CDD" id="cd01926">
    <property type="entry name" value="cyclophilin_ABH_like"/>
    <property type="match status" value="1"/>
</dbReference>
<dbReference type="FunFam" id="2.40.100.10:FF:000013">
    <property type="entry name" value="Peptidyl-prolyl cis-trans isomerase"/>
    <property type="match status" value="1"/>
</dbReference>
<dbReference type="Gene3D" id="2.40.100.10">
    <property type="entry name" value="Cyclophilin-like"/>
    <property type="match status" value="1"/>
</dbReference>
<dbReference type="InterPro" id="IPR029000">
    <property type="entry name" value="Cyclophilin-like_dom_sf"/>
</dbReference>
<dbReference type="InterPro" id="IPR020892">
    <property type="entry name" value="Cyclophilin-type_PPIase_CS"/>
</dbReference>
<dbReference type="InterPro" id="IPR002130">
    <property type="entry name" value="Cyclophilin-type_PPIase_dom"/>
</dbReference>
<dbReference type="PANTHER" id="PTHR11071">
    <property type="entry name" value="PEPTIDYL-PROLYL CIS-TRANS ISOMERASE"/>
    <property type="match status" value="1"/>
</dbReference>
<dbReference type="PANTHER" id="PTHR11071:SF561">
    <property type="entry name" value="PEPTIDYL-PROLYL CIS-TRANS ISOMERASE D-RELATED"/>
    <property type="match status" value="1"/>
</dbReference>
<dbReference type="Pfam" id="PF00160">
    <property type="entry name" value="Pro_isomerase"/>
    <property type="match status" value="1"/>
</dbReference>
<dbReference type="PRINTS" id="PR00153">
    <property type="entry name" value="CSAPPISMRASE"/>
</dbReference>
<dbReference type="SUPFAM" id="SSF50891">
    <property type="entry name" value="Cyclophilin-like"/>
    <property type="match status" value="1"/>
</dbReference>
<dbReference type="PROSITE" id="PS00170">
    <property type="entry name" value="CSA_PPIASE_1"/>
    <property type="match status" value="1"/>
</dbReference>
<dbReference type="PROSITE" id="PS50072">
    <property type="entry name" value="CSA_PPIASE_2"/>
    <property type="match status" value="1"/>
</dbReference>
<evidence type="ECO:0000255" key="1">
    <source>
        <dbReference type="PROSITE-ProRule" id="PRU00156"/>
    </source>
</evidence>
<evidence type="ECO:0000269" key="2">
    <source>
    </source>
</evidence>
<evidence type="ECO:0000305" key="3"/>
<reference key="1">
    <citation type="journal article" date="2000" name="Science">
        <title>The genome sequence of Drosophila melanogaster.</title>
        <authorList>
            <person name="Adams M.D."/>
            <person name="Celniker S.E."/>
            <person name="Holt R.A."/>
            <person name="Evans C.A."/>
            <person name="Gocayne J.D."/>
            <person name="Amanatides P.G."/>
            <person name="Scherer S.E."/>
            <person name="Li P.W."/>
            <person name="Hoskins R.A."/>
            <person name="Galle R.F."/>
            <person name="George R.A."/>
            <person name="Lewis S.E."/>
            <person name="Richards S."/>
            <person name="Ashburner M."/>
            <person name="Henderson S.N."/>
            <person name="Sutton G.G."/>
            <person name="Wortman J.R."/>
            <person name="Yandell M.D."/>
            <person name="Zhang Q."/>
            <person name="Chen L.X."/>
            <person name="Brandon R.C."/>
            <person name="Rogers Y.-H.C."/>
            <person name="Blazej R.G."/>
            <person name="Champe M."/>
            <person name="Pfeiffer B.D."/>
            <person name="Wan K.H."/>
            <person name="Doyle C."/>
            <person name="Baxter E.G."/>
            <person name="Helt G."/>
            <person name="Nelson C.R."/>
            <person name="Miklos G.L.G."/>
            <person name="Abril J.F."/>
            <person name="Agbayani A."/>
            <person name="An H.-J."/>
            <person name="Andrews-Pfannkoch C."/>
            <person name="Baldwin D."/>
            <person name="Ballew R.M."/>
            <person name="Basu A."/>
            <person name="Baxendale J."/>
            <person name="Bayraktaroglu L."/>
            <person name="Beasley E.M."/>
            <person name="Beeson K.Y."/>
            <person name="Benos P.V."/>
            <person name="Berman B.P."/>
            <person name="Bhandari D."/>
            <person name="Bolshakov S."/>
            <person name="Borkova D."/>
            <person name="Botchan M.R."/>
            <person name="Bouck J."/>
            <person name="Brokstein P."/>
            <person name="Brottier P."/>
            <person name="Burtis K.C."/>
            <person name="Busam D.A."/>
            <person name="Butler H."/>
            <person name="Cadieu E."/>
            <person name="Center A."/>
            <person name="Chandra I."/>
            <person name="Cherry J.M."/>
            <person name="Cawley S."/>
            <person name="Dahlke C."/>
            <person name="Davenport L.B."/>
            <person name="Davies P."/>
            <person name="de Pablos B."/>
            <person name="Delcher A."/>
            <person name="Deng Z."/>
            <person name="Mays A.D."/>
            <person name="Dew I."/>
            <person name="Dietz S.M."/>
            <person name="Dodson K."/>
            <person name="Doup L.E."/>
            <person name="Downes M."/>
            <person name="Dugan-Rocha S."/>
            <person name="Dunkov B.C."/>
            <person name="Dunn P."/>
            <person name="Durbin K.J."/>
            <person name="Evangelista C.C."/>
            <person name="Ferraz C."/>
            <person name="Ferriera S."/>
            <person name="Fleischmann W."/>
            <person name="Fosler C."/>
            <person name="Gabrielian A.E."/>
            <person name="Garg N.S."/>
            <person name="Gelbart W.M."/>
            <person name="Glasser K."/>
            <person name="Glodek A."/>
            <person name="Gong F."/>
            <person name="Gorrell J.H."/>
            <person name="Gu Z."/>
            <person name="Guan P."/>
            <person name="Harris M."/>
            <person name="Harris N.L."/>
            <person name="Harvey D.A."/>
            <person name="Heiman T.J."/>
            <person name="Hernandez J.R."/>
            <person name="Houck J."/>
            <person name="Hostin D."/>
            <person name="Houston K.A."/>
            <person name="Howland T.J."/>
            <person name="Wei M.-H."/>
            <person name="Ibegwam C."/>
            <person name="Jalali M."/>
            <person name="Kalush F."/>
            <person name="Karpen G.H."/>
            <person name="Ke Z."/>
            <person name="Kennison J.A."/>
            <person name="Ketchum K.A."/>
            <person name="Kimmel B.E."/>
            <person name="Kodira C.D."/>
            <person name="Kraft C.L."/>
            <person name="Kravitz S."/>
            <person name="Kulp D."/>
            <person name="Lai Z."/>
            <person name="Lasko P."/>
            <person name="Lei Y."/>
            <person name="Levitsky A.A."/>
            <person name="Li J.H."/>
            <person name="Li Z."/>
            <person name="Liang Y."/>
            <person name="Lin X."/>
            <person name="Liu X."/>
            <person name="Mattei B."/>
            <person name="McIntosh T.C."/>
            <person name="McLeod M.P."/>
            <person name="McPherson D."/>
            <person name="Merkulov G."/>
            <person name="Milshina N.V."/>
            <person name="Mobarry C."/>
            <person name="Morris J."/>
            <person name="Moshrefi A."/>
            <person name="Mount S.M."/>
            <person name="Moy M."/>
            <person name="Murphy B."/>
            <person name="Murphy L."/>
            <person name="Muzny D.M."/>
            <person name="Nelson D.L."/>
            <person name="Nelson D.R."/>
            <person name="Nelson K.A."/>
            <person name="Nixon K."/>
            <person name="Nusskern D.R."/>
            <person name="Pacleb J.M."/>
            <person name="Palazzolo M."/>
            <person name="Pittman G.S."/>
            <person name="Pan S."/>
            <person name="Pollard J."/>
            <person name="Puri V."/>
            <person name="Reese M.G."/>
            <person name="Reinert K."/>
            <person name="Remington K."/>
            <person name="Saunders R.D.C."/>
            <person name="Scheeler F."/>
            <person name="Shen H."/>
            <person name="Shue B.C."/>
            <person name="Siden-Kiamos I."/>
            <person name="Simpson M."/>
            <person name="Skupski M.P."/>
            <person name="Smith T.J."/>
            <person name="Spier E."/>
            <person name="Spradling A.C."/>
            <person name="Stapleton M."/>
            <person name="Strong R."/>
            <person name="Sun E."/>
            <person name="Svirskas R."/>
            <person name="Tector C."/>
            <person name="Turner R."/>
            <person name="Venter E."/>
            <person name="Wang A.H."/>
            <person name="Wang X."/>
            <person name="Wang Z.-Y."/>
            <person name="Wassarman D.A."/>
            <person name="Weinstock G.M."/>
            <person name="Weissenbach J."/>
            <person name="Williams S.M."/>
            <person name="Woodage T."/>
            <person name="Worley K.C."/>
            <person name="Wu D."/>
            <person name="Yang S."/>
            <person name="Yao Q.A."/>
            <person name="Ye J."/>
            <person name="Yeh R.-F."/>
            <person name="Zaveri J.S."/>
            <person name="Zhan M."/>
            <person name="Zhang G."/>
            <person name="Zhao Q."/>
            <person name="Zheng L."/>
            <person name="Zheng X.H."/>
            <person name="Zhong F.N."/>
            <person name="Zhong W."/>
            <person name="Zhou X."/>
            <person name="Zhu S.C."/>
            <person name="Zhu X."/>
            <person name="Smith H.O."/>
            <person name="Gibbs R.A."/>
            <person name="Myers E.W."/>
            <person name="Rubin G.M."/>
            <person name="Venter J.C."/>
        </authorList>
    </citation>
    <scope>NUCLEOTIDE SEQUENCE [LARGE SCALE GENOMIC DNA]</scope>
    <source>
        <strain>Berkeley</strain>
    </source>
</reference>
<reference key="2">
    <citation type="journal article" date="2002" name="Genome Biol.">
        <title>Annotation of the Drosophila melanogaster euchromatic genome: a systematic review.</title>
        <authorList>
            <person name="Misra S."/>
            <person name="Crosby M.A."/>
            <person name="Mungall C.J."/>
            <person name="Matthews B.B."/>
            <person name="Campbell K.S."/>
            <person name="Hradecky P."/>
            <person name="Huang Y."/>
            <person name="Kaminker J.S."/>
            <person name="Millburn G.H."/>
            <person name="Prochnik S.E."/>
            <person name="Smith C.D."/>
            <person name="Tupy J.L."/>
            <person name="Whitfield E.J."/>
            <person name="Bayraktaroglu L."/>
            <person name="Berman B.P."/>
            <person name="Bettencourt B.R."/>
            <person name="Celniker S.E."/>
            <person name="de Grey A.D.N.J."/>
            <person name="Drysdale R.A."/>
            <person name="Harris N.L."/>
            <person name="Richter J."/>
            <person name="Russo S."/>
            <person name="Schroeder A.J."/>
            <person name="Shu S.Q."/>
            <person name="Stapleton M."/>
            <person name="Yamada C."/>
            <person name="Ashburner M."/>
            <person name="Gelbart W.M."/>
            <person name="Rubin G.M."/>
            <person name="Lewis S.E."/>
        </authorList>
    </citation>
    <scope>GENOME REANNOTATION</scope>
    <source>
        <strain>Berkeley</strain>
    </source>
</reference>
<reference key="3">
    <citation type="submission" date="2003-08" db="EMBL/GenBank/DDBJ databases">
        <authorList>
            <person name="Stapleton M."/>
            <person name="Brokstein P."/>
            <person name="Hong L."/>
            <person name="Agbayani A."/>
            <person name="Carlson J.W."/>
            <person name="Champe M."/>
            <person name="Chavez C."/>
            <person name="Dorsett V."/>
            <person name="Dresnek D."/>
            <person name="Farfan D."/>
            <person name="Frise E."/>
            <person name="George R.A."/>
            <person name="Gonzalez M."/>
            <person name="Guarin H."/>
            <person name="Kronmiller B."/>
            <person name="Li P.W."/>
            <person name="Liao G."/>
            <person name="Miranda A."/>
            <person name="Mungall C.J."/>
            <person name="Nunoo J."/>
            <person name="Pacleb J.M."/>
            <person name="Paragas V."/>
            <person name="Park S."/>
            <person name="Patel S."/>
            <person name="Phouanenavong S."/>
            <person name="Wan K.H."/>
            <person name="Yu C."/>
            <person name="Lewis S.E."/>
            <person name="Rubin G.M."/>
            <person name="Celniker S.E."/>
        </authorList>
    </citation>
    <scope>NUCLEOTIDE SEQUENCE [LARGE SCALE MRNA] OF 19-227</scope>
    <source>
        <strain>Berkeley</strain>
        <tissue>Embryo</tissue>
    </source>
</reference>
<reference key="4">
    <citation type="journal article" date="1991" name="Cell">
        <title>The cyclophilin homolog ninaA is a tissue-specific integral membrane protein required for the proper synthesis of a subset of Drosophila rhodopsins.</title>
        <authorList>
            <person name="Stamnes M.A."/>
            <person name="Shieh B.-H."/>
            <person name="Chuman L."/>
            <person name="Harris G.L."/>
            <person name="Zuker C.S."/>
        </authorList>
    </citation>
    <scope>NUCLEOTIDE SEQUENCE [MRNA] OF 53-227</scope>
</reference>
<reference key="5">
    <citation type="journal article" date="1993" name="Exp. Cell Res.">
        <title>Identification of Drosophila wing imaginal disc proteins by two-dimensional gel analysis and microsequencing.</title>
        <authorList>
            <person name="Santaren J.F."/>
            <person name="van Damme J."/>
            <person name="Puype M."/>
            <person name="Vandekerckhove J."/>
            <person name="Garcia-Bellido A."/>
        </authorList>
    </citation>
    <scope>PROTEIN SEQUENCE OF 69-82</scope>
    <source>
        <strain>Vallecas</strain>
        <tissue>Wing imaginal disk</tissue>
    </source>
</reference>
<reference key="6">
    <citation type="journal article" date="2008" name="J. Proteome Res.">
        <title>Phosphoproteome analysis of Drosophila melanogaster embryos.</title>
        <authorList>
            <person name="Zhai B."/>
            <person name="Villen J."/>
            <person name="Beausoleil S.A."/>
            <person name="Mintseris J."/>
            <person name="Gygi S.P."/>
        </authorList>
    </citation>
    <scope>PHOSPHORYLATION [LARGE SCALE ANALYSIS] AT SER-158</scope>
    <scope>IDENTIFICATION BY MASS SPECTROMETRY</scope>
    <source>
        <tissue>Embryo</tissue>
    </source>
</reference>
<comment type="function">
    <text>PPIases accelerate the folding of proteins. It catalyzes the cis-trans isomerization of proline imidic peptide bonds in oligopeptides.</text>
</comment>
<comment type="catalytic activity">
    <reaction>
        <text>[protein]-peptidylproline (omega=180) = [protein]-peptidylproline (omega=0)</text>
        <dbReference type="Rhea" id="RHEA:16237"/>
        <dbReference type="Rhea" id="RHEA-COMP:10747"/>
        <dbReference type="Rhea" id="RHEA-COMP:10748"/>
        <dbReference type="ChEBI" id="CHEBI:83833"/>
        <dbReference type="ChEBI" id="CHEBI:83834"/>
        <dbReference type="EC" id="5.2.1.8"/>
    </reaction>
</comment>
<comment type="activity regulation">
    <text>Binds cyclosporin A (CsA). CsA mediates some of its effects via an inhibitory action on PPIase.</text>
</comment>
<comment type="subcellular location">
    <subcellularLocation>
        <location>Cytoplasm</location>
    </subcellularLocation>
</comment>
<comment type="similarity">
    <text evidence="3">Belongs to the cyclophilin-type PPIase family. PPIase A subfamily.</text>
</comment>
<comment type="sequence caution" evidence="3">
    <conflict type="erroneous initiation">
        <sequence resource="EMBL-CDS" id="AAB03701"/>
    </conflict>
</comment>
<comment type="sequence caution" evidence="3">
    <conflict type="erroneous initiation">
        <sequence resource="EMBL-CDS" id="AAQ22415"/>
    </conflict>
</comment>
<proteinExistence type="evidence at protein level"/>
<keyword id="KW-0963">Cytoplasm</keyword>
<keyword id="KW-0903">Direct protein sequencing</keyword>
<keyword id="KW-0413">Isomerase</keyword>
<keyword id="KW-0597">Phosphoprotein</keyword>
<keyword id="KW-1185">Reference proteome</keyword>
<keyword id="KW-0697">Rotamase</keyword>
<protein>
    <recommendedName>
        <fullName>Peptidyl-prolyl cis-trans isomerase</fullName>
        <shortName>PPIase</shortName>
        <ecNumber>5.2.1.8</ecNumber>
    </recommendedName>
    <alternativeName>
        <fullName>Cyclophilin</fullName>
    </alternativeName>
    <alternativeName>
        <fullName>Cyclosporin A-binding protein</fullName>
    </alternativeName>
    <alternativeName>
        <fullName>Rotamase</fullName>
    </alternativeName>
</protein>
<gene>
    <name type="primary">Cyp1</name>
    <name type="synonym">Cyp-1</name>
    <name type="ORF">CG9916</name>
</gene>
<accession>P25007</accession>
<accession>Q9VXH8</accession>